<reference key="1">
    <citation type="journal article" date="1978" name="Nature">
        <title>Nucleotide sequence of bacteriophage G4 DNA.</title>
        <authorList>
            <person name="Godson G.N."/>
            <person name="Barrell B.G."/>
            <person name="Staden R."/>
            <person name="Fiddes J.C."/>
        </authorList>
    </citation>
    <scope>NUCLEOTIDE SEQUENCE [GENOMIC DNA]</scope>
</reference>
<reference key="2">
    <citation type="journal article" date="1979" name="J. Mol. Biol.">
        <title>Evolution of the three overlapping gene systems in G4 and phi X174.</title>
        <authorList>
            <person name="Fiddes J.C."/>
            <person name="Godson G.N."/>
        </authorList>
    </citation>
    <scope>NUCLEOTIDE SEQUENCE [GENOMIC DNA] OF 56-152</scope>
</reference>
<comment type="function">
    <text evidence="1">Assembles the procapsid by joining twelve 12S pre-assembly complex into a T=1 icosahedral particle, called 108S procapsid. Ten proteins D bind each 12S complex, which are formed by three pentamers of F, G, B protein and a H protein. The scaffolding protein is released from the provirion after genome packaging to form the mature virion.</text>
</comment>
<comment type="subunit">
    <text evidence="1">Component of the procapsid particle composed of 60 copies of the internally located B, 240 copies of the external scaffolding protein D, 60 copies of each of the viral structural proteins F and G, and 12 copies of protein H.</text>
</comment>
<comment type="subcellular location">
    <subcellularLocation>
        <location evidence="1">Host cytoplasm</location>
    </subcellularLocation>
</comment>
<comment type="similarity">
    <text evidence="2">Belongs to the microvirus D protein family.</text>
</comment>
<accession>P03638</accession>
<organism>
    <name type="scientific">Escherichia phage G4</name>
    <name type="common">Bacteriophage G4</name>
    <dbReference type="NCBI Taxonomy" id="10843"/>
    <lineage>
        <taxon>Viruses</taxon>
        <taxon>Monodnaviria</taxon>
        <taxon>Sangervirae</taxon>
        <taxon>Phixviricota</taxon>
        <taxon>Malgrandaviricetes</taxon>
        <taxon>Petitvirales</taxon>
        <taxon>Microviridae</taxon>
        <taxon>Bullavirinae</taxon>
        <taxon>Gequatrovirus</taxon>
        <taxon>Gequatrovirus G4</taxon>
    </lineage>
</organism>
<feature type="initiator methionine" description="Removed; by host" evidence="1">
    <location>
        <position position="1"/>
    </location>
</feature>
<feature type="chain" id="PRO_0000164878" description="External scaffolding protein D" evidence="1">
    <location>
        <begin position="2"/>
        <end position="152"/>
    </location>
</feature>
<feature type="sequence conflict" description="In Ref. 2; AAA32326." evidence="2" ref="2">
    <original>R</original>
    <variation>A</variation>
    <location>
        <position position="70"/>
    </location>
</feature>
<dbReference type="EMBL" id="V00657">
    <property type="protein sequence ID" value="CAA24016.1"/>
    <property type="molecule type" value="Genomic_DNA"/>
</dbReference>
<dbReference type="EMBL" id="M10637">
    <property type="protein sequence ID" value="AAA32326.1"/>
    <property type="molecule type" value="Genomic_DNA"/>
</dbReference>
<dbReference type="PIR" id="A04246">
    <property type="entry name" value="ZDBPG4"/>
</dbReference>
<dbReference type="SMR" id="P03638"/>
<dbReference type="OrthoDB" id="12694at10239"/>
<dbReference type="Proteomes" id="UP000002140">
    <property type="component" value="Segment"/>
</dbReference>
<dbReference type="GO" id="GO:0030430">
    <property type="term" value="C:host cell cytoplasm"/>
    <property type="evidence" value="ECO:0007669"/>
    <property type="project" value="UniProtKB-SubCell"/>
</dbReference>
<dbReference type="GO" id="GO:0046797">
    <property type="term" value="P:viral procapsid maturation"/>
    <property type="evidence" value="ECO:0007669"/>
    <property type="project" value="InterPro"/>
</dbReference>
<dbReference type="Gene3D" id="1.10.1850.10">
    <property type="entry name" value="Scaffold protein D"/>
    <property type="match status" value="1"/>
</dbReference>
<dbReference type="InterPro" id="IPR004196">
    <property type="entry name" value="Scaffold_D"/>
</dbReference>
<dbReference type="InterPro" id="IPR036632">
    <property type="entry name" value="Scaffold_D_sf"/>
</dbReference>
<dbReference type="Pfam" id="PF02925">
    <property type="entry name" value="gpD"/>
    <property type="match status" value="1"/>
</dbReference>
<dbReference type="SUPFAM" id="SSF48045">
    <property type="entry name" value="Scaffolding protein gpD of bacteriophage procapsid"/>
    <property type="match status" value="1"/>
</dbReference>
<keyword id="KW-1035">Host cytoplasm</keyword>
<keyword id="KW-1185">Reference proteome</keyword>
<keyword id="KW-0118">Viral capsid assembly</keyword>
<keyword id="KW-1188">Viral release from host cell</keyword>
<evidence type="ECO:0000250" key="1">
    <source>
        <dbReference type="UniProtKB" id="P69486"/>
    </source>
</evidence>
<evidence type="ECO:0000305" key="2"/>
<sequence length="152" mass="16872">MSKSNESAVAFQTAIASIKLIQASSVLDLTEDDFDFLTRDRVWIATDRSRARRAIEACVYGTLDFVGYPRFPAPVEFISAVIAYYVHPVNIQTACLIMEGAEFTENIVNGVERPVKASELFAFTLLVRAGNKDLIGHAETNIREQLRAQGVM</sequence>
<protein>
    <recommendedName>
        <fullName>External scaffolding protein D</fullName>
    </recommendedName>
    <alternativeName>
        <fullName>Scaffolding protein D</fullName>
        <shortName>GPD</shortName>
    </alternativeName>
</protein>
<organismHost>
    <name type="scientific">Escherichia coli</name>
    <dbReference type="NCBI Taxonomy" id="562"/>
</organismHost>
<proteinExistence type="inferred from homology"/>
<gene>
    <name type="primary">D</name>
</gene>
<name>SCAFD_BPG4</name>